<comment type="function">
    <text evidence="1 2">Catalytic component of the signal peptidase complex (SPC) which catalyzes the cleavage of N-terminal signal sequences from nascent proteins as they are translocated into the lumen of the endoplasmic reticulum (By similarity). Specifically cleaves N-terminal signal peptides that contain a hydrophobic alpha-helix (h-region) shorter than 18-20 amino acids (By similarity).</text>
</comment>
<comment type="catalytic activity">
    <reaction evidence="1">
        <text>Cleavage of hydrophobic, N-terminal signal or leader sequences from secreted and periplasmic proteins.</text>
        <dbReference type="EC" id="3.4.21.89"/>
    </reaction>
</comment>
<comment type="subunit">
    <text evidence="1 2">Component of the signal peptidase complex (SPC) composed of a catalytic subunit SEC11 and three accessory subunits SPC1, SPC2 and SPC3 (By similarity). The complex induces a local thinning of the ER membrane which is used to measure the length of the signal peptide (SP) h-region of protein substrates. This ensures the selectivity of the complex towards h-regions shorter than 18-20 amino acids (By similarity). SPC associates with the translocon complex (By similarity).</text>
</comment>
<comment type="subcellular location">
    <subcellularLocation>
        <location evidence="1">Endoplasmic reticulum membrane</location>
        <topology evidence="1">Single-pass type II membrane protein</topology>
    </subcellularLocation>
</comment>
<comment type="domain">
    <text evidence="2">The C-terminal short (CTS) helix is essential for catalytic activity. It may be accommodated as a transmembrane helix in the thinned membrane environment of the complex, similarly to the signal peptide in the complex substrates.</text>
</comment>
<comment type="similarity">
    <text evidence="5">Belongs to the peptidase S26B family.</text>
</comment>
<gene>
    <name type="primary">SEC11</name>
    <name type="ORF">PADG_00808</name>
</gene>
<evidence type="ECO:0000250" key="1">
    <source>
        <dbReference type="UniProtKB" id="P15367"/>
    </source>
</evidence>
<evidence type="ECO:0000250" key="2">
    <source>
        <dbReference type="UniProtKB" id="P67812"/>
    </source>
</evidence>
<evidence type="ECO:0000255" key="3"/>
<evidence type="ECO:0000256" key="4">
    <source>
        <dbReference type="SAM" id="MobiDB-lite"/>
    </source>
</evidence>
<evidence type="ECO:0000305" key="5"/>
<sequence length="197" mass="21987">MLSSLAPYMANPRQTLTQVLNFALVLSTAFMLWKGLSVITNSTSPIVVVLSGSMEPAFQRGDLLFLWNRSPRVDVGEIVVYNVRGKDIPIVHRVMRSFPELPGREDKKNVKKGGEEGEETSSTPSQKLLTKGDNNMADDTELYAQGQEYLDRKEDIVGSVRGYVPTVGYVTILLSEHPWLRSVLLGFMGLMVVLQRE</sequence>
<keyword id="KW-0256">Endoplasmic reticulum</keyword>
<keyword id="KW-0325">Glycoprotein</keyword>
<keyword id="KW-0378">Hydrolase</keyword>
<keyword id="KW-0472">Membrane</keyword>
<keyword id="KW-0645">Protease</keyword>
<keyword id="KW-1185">Reference proteome</keyword>
<keyword id="KW-0735">Signal-anchor</keyword>
<keyword id="KW-0812">Transmembrane</keyword>
<keyword id="KW-1133">Transmembrane helix</keyword>
<proteinExistence type="inferred from homology"/>
<accession>C1FYD2</accession>
<feature type="chain" id="PRO_0000412347" description="Signal peptidase complex catalytic subunit SEC11">
    <location>
        <begin position="1"/>
        <end position="197"/>
    </location>
</feature>
<feature type="topological domain" description="Cytoplasmic" evidence="3">
    <location>
        <begin position="1"/>
        <end position="14"/>
    </location>
</feature>
<feature type="transmembrane region" description="Helical; Signal-anchor for type II membrane protein" evidence="3">
    <location>
        <begin position="15"/>
        <end position="33"/>
    </location>
</feature>
<feature type="topological domain" description="Lumenal" evidence="3">
    <location>
        <begin position="34"/>
        <end position="197"/>
    </location>
</feature>
<feature type="region of interest" description="Disordered" evidence="4">
    <location>
        <begin position="102"/>
        <end position="134"/>
    </location>
</feature>
<feature type="region of interest" description="C-terminal short (CTS) helix" evidence="2">
    <location>
        <begin position="183"/>
        <end position="194"/>
    </location>
</feature>
<feature type="compositionally biased region" description="Basic and acidic residues" evidence="4">
    <location>
        <begin position="102"/>
        <end position="115"/>
    </location>
</feature>
<feature type="active site" description="Charge relay system" evidence="1">
    <location>
        <position position="53"/>
    </location>
</feature>
<feature type="active site" description="Charge relay system" evidence="1">
    <location>
        <position position="92"/>
    </location>
</feature>
<feature type="active site" description="Charge relay system" evidence="1">
    <location>
        <position position="139"/>
    </location>
</feature>
<feature type="glycosylation site" description="N-linked (GlcNAc...) asparagine" evidence="3">
    <location>
        <position position="41"/>
    </location>
</feature>
<protein>
    <recommendedName>
        <fullName>Signal peptidase complex catalytic subunit SEC11</fullName>
        <ecNumber evidence="1">3.4.21.89</ecNumber>
    </recommendedName>
    <alternativeName>
        <fullName>Signal peptidase I</fullName>
    </alternativeName>
</protein>
<dbReference type="EC" id="3.4.21.89" evidence="1"/>
<dbReference type="EMBL" id="KN275957">
    <property type="protein sequence ID" value="EEH44519.1"/>
    <property type="molecule type" value="Genomic_DNA"/>
</dbReference>
<dbReference type="RefSeq" id="XP_010756501.1">
    <property type="nucleotide sequence ID" value="XM_010758199.1"/>
</dbReference>
<dbReference type="SMR" id="C1FYD2"/>
<dbReference type="FunCoup" id="C1FYD2">
    <property type="interactions" value="623"/>
</dbReference>
<dbReference type="STRING" id="502780.C1FYD2"/>
<dbReference type="GlyCosmos" id="C1FYD2">
    <property type="glycosylation" value="1 site, No reported glycans"/>
</dbReference>
<dbReference type="GeneID" id="22580588"/>
<dbReference type="KEGG" id="pbn:PADG_00808"/>
<dbReference type="VEuPathDB" id="FungiDB:PADG_00808"/>
<dbReference type="eggNOG" id="KOG3342">
    <property type="taxonomic scope" value="Eukaryota"/>
</dbReference>
<dbReference type="HOGENOM" id="CLU_089996_0_0_1"/>
<dbReference type="InParanoid" id="C1FYD2"/>
<dbReference type="OMA" id="ILMNEYP"/>
<dbReference type="OrthoDB" id="30755at33183"/>
<dbReference type="Proteomes" id="UP000001628">
    <property type="component" value="Unassembled WGS sequence"/>
</dbReference>
<dbReference type="GO" id="GO:0005787">
    <property type="term" value="C:signal peptidase complex"/>
    <property type="evidence" value="ECO:0007669"/>
    <property type="project" value="EnsemblFungi"/>
</dbReference>
<dbReference type="GO" id="GO:0004252">
    <property type="term" value="F:serine-type endopeptidase activity"/>
    <property type="evidence" value="ECO:0007669"/>
    <property type="project" value="UniProtKB-EC"/>
</dbReference>
<dbReference type="GO" id="GO:0045047">
    <property type="term" value="P:protein targeting to ER"/>
    <property type="evidence" value="ECO:0007669"/>
    <property type="project" value="EnsemblFungi"/>
</dbReference>
<dbReference type="GO" id="GO:0006465">
    <property type="term" value="P:signal peptide processing"/>
    <property type="evidence" value="ECO:0007669"/>
    <property type="project" value="EnsemblFungi"/>
</dbReference>
<dbReference type="CDD" id="cd06530">
    <property type="entry name" value="S26_SPase_I"/>
    <property type="match status" value="1"/>
</dbReference>
<dbReference type="InterPro" id="IPR036286">
    <property type="entry name" value="LexA/Signal_pep-like_sf"/>
</dbReference>
<dbReference type="InterPro" id="IPR019756">
    <property type="entry name" value="Pept_S26A_signal_pept_1_Ser-AS"/>
</dbReference>
<dbReference type="InterPro" id="IPR019533">
    <property type="entry name" value="Peptidase_S26"/>
</dbReference>
<dbReference type="InterPro" id="IPR001733">
    <property type="entry name" value="Peptidase_S26B"/>
</dbReference>
<dbReference type="NCBIfam" id="TIGR02228">
    <property type="entry name" value="sigpep_I_arch"/>
    <property type="match status" value="1"/>
</dbReference>
<dbReference type="PANTHER" id="PTHR10806">
    <property type="entry name" value="SIGNAL PEPTIDASE COMPLEX CATALYTIC SUBUNIT SEC11"/>
    <property type="match status" value="1"/>
</dbReference>
<dbReference type="PANTHER" id="PTHR10806:SF6">
    <property type="entry name" value="SIGNAL PEPTIDASE COMPLEX CATALYTIC SUBUNIT SEC11"/>
    <property type="match status" value="1"/>
</dbReference>
<dbReference type="PRINTS" id="PR00728">
    <property type="entry name" value="SIGNALPTASE"/>
</dbReference>
<dbReference type="SUPFAM" id="SSF51306">
    <property type="entry name" value="LexA/Signal peptidase"/>
    <property type="match status" value="1"/>
</dbReference>
<dbReference type="PROSITE" id="PS00501">
    <property type="entry name" value="SPASE_I_1"/>
    <property type="match status" value="1"/>
</dbReference>
<name>SEC11_PARBD</name>
<organism>
    <name type="scientific">Paracoccidioides brasiliensis (strain Pb18)</name>
    <dbReference type="NCBI Taxonomy" id="502780"/>
    <lineage>
        <taxon>Eukaryota</taxon>
        <taxon>Fungi</taxon>
        <taxon>Dikarya</taxon>
        <taxon>Ascomycota</taxon>
        <taxon>Pezizomycotina</taxon>
        <taxon>Eurotiomycetes</taxon>
        <taxon>Eurotiomycetidae</taxon>
        <taxon>Onygenales</taxon>
        <taxon>Ajellomycetaceae</taxon>
        <taxon>Paracoccidioides</taxon>
    </lineage>
</organism>
<reference key="1">
    <citation type="journal article" date="2011" name="PLoS Genet.">
        <title>Comparative genomic analysis of human fungal pathogens causing paracoccidioidomycosis.</title>
        <authorList>
            <person name="Desjardins C.A."/>
            <person name="Champion M.D."/>
            <person name="Holder J.W."/>
            <person name="Muszewska A."/>
            <person name="Goldberg J."/>
            <person name="Bailao A.M."/>
            <person name="Brigido M.M."/>
            <person name="Ferreira M.E."/>
            <person name="Garcia A.M."/>
            <person name="Grynberg M."/>
            <person name="Gujja S."/>
            <person name="Heiman D.I."/>
            <person name="Henn M.R."/>
            <person name="Kodira C.D."/>
            <person name="Leon-Narvaez H."/>
            <person name="Longo L.V.G."/>
            <person name="Ma L.-J."/>
            <person name="Malavazi I."/>
            <person name="Matsuo A.L."/>
            <person name="Morais F.V."/>
            <person name="Pereira M."/>
            <person name="Rodriguez-Brito S."/>
            <person name="Sakthikumar S."/>
            <person name="Salem-Izacc S.M."/>
            <person name="Sykes S.M."/>
            <person name="Teixeira M.M."/>
            <person name="Vallejo M.C."/>
            <person name="Walter M.E."/>
            <person name="Yandava C."/>
            <person name="Young S."/>
            <person name="Zeng Q."/>
            <person name="Zucker J."/>
            <person name="Felipe M.S."/>
            <person name="Goldman G.H."/>
            <person name="Haas B.J."/>
            <person name="McEwen J.G."/>
            <person name="Nino-Vega G."/>
            <person name="Puccia R."/>
            <person name="San-Blas G."/>
            <person name="Soares C.M."/>
            <person name="Birren B.W."/>
            <person name="Cuomo C.A."/>
        </authorList>
    </citation>
    <scope>NUCLEOTIDE SEQUENCE [LARGE SCALE GENOMIC DNA]</scope>
    <source>
        <strain>Pb18</strain>
    </source>
</reference>